<gene>
    <name evidence="1" type="primary">hemA</name>
    <name type="ordered locus">CKR_0583</name>
</gene>
<reference key="1">
    <citation type="submission" date="2005-09" db="EMBL/GenBank/DDBJ databases">
        <title>Complete genome sequence of Clostridium kluyveri and comparative genomics of Clostridia species.</title>
        <authorList>
            <person name="Inui M."/>
            <person name="Nonaka H."/>
            <person name="Shinoda Y."/>
            <person name="Ikenaga Y."/>
            <person name="Abe M."/>
            <person name="Naito K."/>
            <person name="Vertes A.A."/>
            <person name="Yukawa H."/>
        </authorList>
    </citation>
    <scope>NUCLEOTIDE SEQUENCE [LARGE SCALE GENOMIC DNA]</scope>
    <source>
        <strain>NBRC 12016</strain>
    </source>
</reference>
<organism>
    <name type="scientific">Clostridium kluyveri (strain NBRC 12016)</name>
    <dbReference type="NCBI Taxonomy" id="583346"/>
    <lineage>
        <taxon>Bacteria</taxon>
        <taxon>Bacillati</taxon>
        <taxon>Bacillota</taxon>
        <taxon>Clostridia</taxon>
        <taxon>Eubacteriales</taxon>
        <taxon>Clostridiaceae</taxon>
        <taxon>Clostridium</taxon>
    </lineage>
</organism>
<comment type="function">
    <text evidence="1">Catalyzes the NADPH-dependent reduction of glutamyl-tRNA(Glu) to glutamate 1-semialdehyde (GSA).</text>
</comment>
<comment type="catalytic activity">
    <reaction evidence="1">
        <text>(S)-4-amino-5-oxopentanoate + tRNA(Glu) + NADP(+) = L-glutamyl-tRNA(Glu) + NADPH + H(+)</text>
        <dbReference type="Rhea" id="RHEA:12344"/>
        <dbReference type="Rhea" id="RHEA-COMP:9663"/>
        <dbReference type="Rhea" id="RHEA-COMP:9680"/>
        <dbReference type="ChEBI" id="CHEBI:15378"/>
        <dbReference type="ChEBI" id="CHEBI:57501"/>
        <dbReference type="ChEBI" id="CHEBI:57783"/>
        <dbReference type="ChEBI" id="CHEBI:58349"/>
        <dbReference type="ChEBI" id="CHEBI:78442"/>
        <dbReference type="ChEBI" id="CHEBI:78520"/>
        <dbReference type="EC" id="1.2.1.70"/>
    </reaction>
</comment>
<comment type="pathway">
    <text evidence="1">Porphyrin-containing compound metabolism; protoporphyrin-IX biosynthesis; 5-aminolevulinate from L-glutamyl-tRNA(Glu): step 1/2.</text>
</comment>
<comment type="subunit">
    <text evidence="1">Homodimer.</text>
</comment>
<comment type="domain">
    <text evidence="1">Possesses an unusual extended V-shaped dimeric structure with each monomer consisting of three distinct domains arranged along a curved 'spinal' alpha-helix. The N-terminal catalytic domain specifically recognizes the glutamate moiety of the substrate. The second domain is the NADPH-binding domain, and the third C-terminal domain is responsible for dimerization.</text>
</comment>
<comment type="miscellaneous">
    <text evidence="1">During catalysis, the active site Cys acts as a nucleophile attacking the alpha-carbonyl group of tRNA-bound glutamate with the formation of a thioester intermediate between enzyme and glutamate, and the concomitant release of tRNA(Glu). The thioester intermediate is finally reduced by direct hydride transfer from NADPH, to form the product GSA.</text>
</comment>
<comment type="similarity">
    <text evidence="1">Belongs to the glutamyl-tRNA reductase family.</text>
</comment>
<name>HEM1_CLOK1</name>
<dbReference type="EC" id="1.2.1.70" evidence="1"/>
<dbReference type="EMBL" id="AP009049">
    <property type="protein sequence ID" value="BAH05634.1"/>
    <property type="molecule type" value="Genomic_DNA"/>
</dbReference>
<dbReference type="SMR" id="B9DZF9"/>
<dbReference type="KEGG" id="ckr:CKR_0583"/>
<dbReference type="HOGENOM" id="CLU_035113_1_0_9"/>
<dbReference type="UniPathway" id="UPA00251">
    <property type="reaction ID" value="UER00316"/>
</dbReference>
<dbReference type="Proteomes" id="UP000007969">
    <property type="component" value="Chromosome"/>
</dbReference>
<dbReference type="GO" id="GO:0008883">
    <property type="term" value="F:glutamyl-tRNA reductase activity"/>
    <property type="evidence" value="ECO:0007669"/>
    <property type="project" value="UniProtKB-UniRule"/>
</dbReference>
<dbReference type="GO" id="GO:0050661">
    <property type="term" value="F:NADP binding"/>
    <property type="evidence" value="ECO:0007669"/>
    <property type="project" value="InterPro"/>
</dbReference>
<dbReference type="GO" id="GO:0019353">
    <property type="term" value="P:protoporphyrinogen IX biosynthetic process from glutamate"/>
    <property type="evidence" value="ECO:0007669"/>
    <property type="project" value="TreeGrafter"/>
</dbReference>
<dbReference type="Gene3D" id="3.30.460.30">
    <property type="entry name" value="Glutamyl-tRNA reductase, N-terminal domain"/>
    <property type="match status" value="1"/>
</dbReference>
<dbReference type="Gene3D" id="3.40.50.720">
    <property type="entry name" value="NAD(P)-binding Rossmann-like Domain"/>
    <property type="match status" value="1"/>
</dbReference>
<dbReference type="HAMAP" id="MF_00087">
    <property type="entry name" value="Glu_tRNA_reductase"/>
    <property type="match status" value="1"/>
</dbReference>
<dbReference type="InterPro" id="IPR000343">
    <property type="entry name" value="4pyrrol_synth_GluRdtase"/>
</dbReference>
<dbReference type="InterPro" id="IPR015896">
    <property type="entry name" value="4pyrrol_synth_GluRdtase_dimer"/>
</dbReference>
<dbReference type="InterPro" id="IPR015895">
    <property type="entry name" value="4pyrrol_synth_GluRdtase_N"/>
</dbReference>
<dbReference type="InterPro" id="IPR018214">
    <property type="entry name" value="GluRdtase_CS"/>
</dbReference>
<dbReference type="InterPro" id="IPR036343">
    <property type="entry name" value="GluRdtase_N_sf"/>
</dbReference>
<dbReference type="InterPro" id="IPR036291">
    <property type="entry name" value="NAD(P)-bd_dom_sf"/>
</dbReference>
<dbReference type="InterPro" id="IPR006151">
    <property type="entry name" value="Shikm_DH/Glu-tRNA_Rdtase"/>
</dbReference>
<dbReference type="NCBIfam" id="TIGR01035">
    <property type="entry name" value="hemA"/>
    <property type="match status" value="1"/>
</dbReference>
<dbReference type="PANTHER" id="PTHR43013">
    <property type="entry name" value="GLUTAMYL-TRNA REDUCTASE"/>
    <property type="match status" value="1"/>
</dbReference>
<dbReference type="PANTHER" id="PTHR43013:SF1">
    <property type="entry name" value="GLUTAMYL-TRNA REDUCTASE"/>
    <property type="match status" value="1"/>
</dbReference>
<dbReference type="Pfam" id="PF00745">
    <property type="entry name" value="GlutR_dimer"/>
    <property type="match status" value="1"/>
</dbReference>
<dbReference type="Pfam" id="PF05201">
    <property type="entry name" value="GlutR_N"/>
    <property type="match status" value="1"/>
</dbReference>
<dbReference type="Pfam" id="PF01488">
    <property type="entry name" value="Shikimate_DH"/>
    <property type="match status" value="1"/>
</dbReference>
<dbReference type="PIRSF" id="PIRSF000445">
    <property type="entry name" value="4pyrrol_synth_GluRdtase"/>
    <property type="match status" value="1"/>
</dbReference>
<dbReference type="SUPFAM" id="SSF69742">
    <property type="entry name" value="Glutamyl tRNA-reductase catalytic, N-terminal domain"/>
    <property type="match status" value="1"/>
</dbReference>
<dbReference type="SUPFAM" id="SSF51735">
    <property type="entry name" value="NAD(P)-binding Rossmann-fold domains"/>
    <property type="match status" value="1"/>
</dbReference>
<dbReference type="PROSITE" id="PS00747">
    <property type="entry name" value="GLUTR"/>
    <property type="match status" value="1"/>
</dbReference>
<accession>B9DZF9</accession>
<feature type="chain" id="PRO_1000190513" description="Glutamyl-tRNA reductase">
    <location>
        <begin position="1"/>
        <end position="399"/>
    </location>
</feature>
<feature type="active site" description="Nucleophile" evidence="1">
    <location>
        <position position="46"/>
    </location>
</feature>
<feature type="binding site" evidence="1">
    <location>
        <begin position="45"/>
        <end position="48"/>
    </location>
    <ligand>
        <name>substrate</name>
    </ligand>
</feature>
<feature type="binding site" evidence="1">
    <location>
        <position position="101"/>
    </location>
    <ligand>
        <name>substrate</name>
    </ligand>
</feature>
<feature type="binding site" evidence="1">
    <location>
        <begin position="106"/>
        <end position="108"/>
    </location>
    <ligand>
        <name>substrate</name>
    </ligand>
</feature>
<feature type="binding site" evidence="1">
    <location>
        <position position="112"/>
    </location>
    <ligand>
        <name>substrate</name>
    </ligand>
</feature>
<feature type="binding site" evidence="1">
    <location>
        <begin position="177"/>
        <end position="182"/>
    </location>
    <ligand>
        <name>NADP(+)</name>
        <dbReference type="ChEBI" id="CHEBI:58349"/>
    </ligand>
</feature>
<feature type="site" description="Important for activity" evidence="1">
    <location>
        <position position="91"/>
    </location>
</feature>
<keyword id="KW-0521">NADP</keyword>
<keyword id="KW-0560">Oxidoreductase</keyword>
<keyword id="KW-0627">Porphyrin biosynthesis</keyword>
<proteinExistence type="inferred from homology"/>
<evidence type="ECO:0000255" key="1">
    <source>
        <dbReference type="HAMAP-Rule" id="MF_00087"/>
    </source>
</evidence>
<sequence length="399" mass="46435">MIQLIGIKSQCDIGIRQKFSITSEVLEGKLKYINELVGSVLILSTCNRTEIYVDSNLEEKKLIDTVFYGLDWDYDLVSYIFYIKDKYAIKHLMEVSCGFHSKILGEDQILGQIKTAYDAALEAKTIKGKLQRLFQKAITCGKEFKHICESYRIPVSIPSIVAKEILNMDIRKYMIIGFGKIGQLLFKYLNNSQAQIIYIAVRDLNKVHDSYKKCGKIRFISFKDRKSYYNDIDCIVSCTSAPDKIISKGDLPCRKLTIFDLAVPEDIDRNVLDLDNVTLYDIDNISVIDEKNKAIRKKTMGKYRYILENHIDKFIKWEKLHQLSPEIQKVKKYGDEICEKRITTFKNKKHTKDNDILVKTMIESTARFYINRAIEVMKEEKLNGREEECLRLINKIFCK</sequence>
<protein>
    <recommendedName>
        <fullName evidence="1">Glutamyl-tRNA reductase</fullName>
        <shortName evidence="1">GluTR</shortName>
        <ecNumber evidence="1">1.2.1.70</ecNumber>
    </recommendedName>
</protein>